<keyword id="KW-0963">Cytoplasm</keyword>
<keyword id="KW-1185">Reference proteome</keyword>
<keyword id="KW-0808">Transferase</keyword>
<accession>Q9KV02</accession>
<feature type="chain" id="PRO_0000214736" description="Sulfurtransferase TusD homolog">
    <location>
        <begin position="1"/>
        <end position="131"/>
    </location>
</feature>
<feature type="active site" description="Cysteine persulfide intermediate" evidence="1">
    <location>
        <position position="81"/>
    </location>
</feature>
<reference key="1">
    <citation type="journal article" date="2000" name="Nature">
        <title>DNA sequence of both chromosomes of the cholera pathogen Vibrio cholerae.</title>
        <authorList>
            <person name="Heidelberg J.F."/>
            <person name="Eisen J.A."/>
            <person name="Nelson W.C."/>
            <person name="Clayton R.A."/>
            <person name="Gwinn M.L."/>
            <person name="Dodson R.J."/>
            <person name="Haft D.H."/>
            <person name="Hickey E.K."/>
            <person name="Peterson J.D."/>
            <person name="Umayam L.A."/>
            <person name="Gill S.R."/>
            <person name="Nelson K.E."/>
            <person name="Read T.D."/>
            <person name="Tettelin H."/>
            <person name="Richardson D.L."/>
            <person name="Ermolaeva M.D."/>
            <person name="Vamathevan J.J."/>
            <person name="Bass S."/>
            <person name="Qin H."/>
            <person name="Dragoi I."/>
            <person name="Sellers P."/>
            <person name="McDonald L.A."/>
            <person name="Utterback T.R."/>
            <person name="Fleischmann R.D."/>
            <person name="Nierman W.C."/>
            <person name="White O."/>
            <person name="Salzberg S.L."/>
            <person name="Smith H.O."/>
            <person name="Colwell R.R."/>
            <person name="Mekalanos J.J."/>
            <person name="Venter J.C."/>
            <person name="Fraser C.M."/>
        </authorList>
    </citation>
    <scope>NUCLEOTIDE SEQUENCE [LARGE SCALE GENOMIC DNA]</scope>
    <source>
        <strain>ATCC 39315 / El Tor Inaba N16961</strain>
    </source>
</reference>
<proteinExistence type="inferred from homology"/>
<organism>
    <name type="scientific">Vibrio cholerae serotype O1 (strain ATCC 39315 / El Tor Inaba N16961)</name>
    <dbReference type="NCBI Taxonomy" id="243277"/>
    <lineage>
        <taxon>Bacteria</taxon>
        <taxon>Pseudomonadati</taxon>
        <taxon>Pseudomonadota</taxon>
        <taxon>Gammaproteobacteria</taxon>
        <taxon>Vibrionales</taxon>
        <taxon>Vibrionaceae</taxon>
        <taxon>Vibrio</taxon>
    </lineage>
</organism>
<gene>
    <name type="primary">tusD</name>
    <name type="ordered locus">VC_0356</name>
</gene>
<name>TUSD_VIBCH</name>
<dbReference type="EC" id="2.8.1.-"/>
<dbReference type="EMBL" id="AE003852">
    <property type="protein sequence ID" value="AAF93529.1"/>
    <property type="molecule type" value="Genomic_DNA"/>
</dbReference>
<dbReference type="PIR" id="F82331">
    <property type="entry name" value="F82331"/>
</dbReference>
<dbReference type="RefSeq" id="NP_230010.1">
    <property type="nucleotide sequence ID" value="NC_002505.1"/>
</dbReference>
<dbReference type="RefSeq" id="WP_000803703.1">
    <property type="nucleotide sequence ID" value="NZ_LT906614.1"/>
</dbReference>
<dbReference type="SMR" id="Q9KV02"/>
<dbReference type="STRING" id="243277.VC_0356"/>
<dbReference type="DNASU" id="2615035"/>
<dbReference type="EnsemblBacteria" id="AAF93529">
    <property type="protein sequence ID" value="AAF93529"/>
    <property type="gene ID" value="VC_0356"/>
</dbReference>
<dbReference type="KEGG" id="vch:VC_0356"/>
<dbReference type="PATRIC" id="fig|243277.26.peg.333"/>
<dbReference type="eggNOG" id="COG1553">
    <property type="taxonomic scope" value="Bacteria"/>
</dbReference>
<dbReference type="HOGENOM" id="CLU_132095_0_0_6"/>
<dbReference type="Proteomes" id="UP000000584">
    <property type="component" value="Chromosome 1"/>
</dbReference>
<dbReference type="GO" id="GO:0005829">
    <property type="term" value="C:cytosol"/>
    <property type="evidence" value="ECO:0000318"/>
    <property type="project" value="GO_Central"/>
</dbReference>
<dbReference type="GO" id="GO:1990228">
    <property type="term" value="C:sulfurtransferase complex"/>
    <property type="evidence" value="ECO:0000318"/>
    <property type="project" value="GO_Central"/>
</dbReference>
<dbReference type="GO" id="GO:0097163">
    <property type="term" value="F:sulfur carrier activity"/>
    <property type="evidence" value="ECO:0000318"/>
    <property type="project" value="GO_Central"/>
</dbReference>
<dbReference type="GO" id="GO:0016783">
    <property type="term" value="F:sulfurtransferase activity"/>
    <property type="evidence" value="ECO:0007669"/>
    <property type="project" value="InterPro"/>
</dbReference>
<dbReference type="GO" id="GO:0002143">
    <property type="term" value="P:tRNA wobble position uridine thiolation"/>
    <property type="evidence" value="ECO:0000318"/>
    <property type="project" value="GO_Central"/>
</dbReference>
<dbReference type="FunFam" id="3.40.1260.10:FF:000001">
    <property type="entry name" value="Sulfurtransferase TusD"/>
    <property type="match status" value="1"/>
</dbReference>
<dbReference type="Gene3D" id="3.40.1260.10">
    <property type="entry name" value="DsrEFH-like"/>
    <property type="match status" value="1"/>
</dbReference>
<dbReference type="InterPro" id="IPR027396">
    <property type="entry name" value="DsrEFH-like"/>
</dbReference>
<dbReference type="InterPro" id="IPR003787">
    <property type="entry name" value="Sulphur_relay_DsrE/F-like"/>
</dbReference>
<dbReference type="InterPro" id="IPR017463">
    <property type="entry name" value="Sulphur_relay_TusD/DsrE"/>
</dbReference>
<dbReference type="NCBIfam" id="NF001237">
    <property type="entry name" value="PRK00207.1"/>
    <property type="match status" value="1"/>
</dbReference>
<dbReference type="NCBIfam" id="TIGR03012">
    <property type="entry name" value="sulf_tusD_dsrE"/>
    <property type="match status" value="1"/>
</dbReference>
<dbReference type="PANTHER" id="PTHR34874">
    <property type="entry name" value="PROTEIN YCHN"/>
    <property type="match status" value="1"/>
</dbReference>
<dbReference type="PANTHER" id="PTHR34874:SF3">
    <property type="entry name" value="SULFURTRANSFERASE TUSD"/>
    <property type="match status" value="1"/>
</dbReference>
<dbReference type="Pfam" id="PF02635">
    <property type="entry name" value="DsrE"/>
    <property type="match status" value="1"/>
</dbReference>
<dbReference type="SUPFAM" id="SSF75169">
    <property type="entry name" value="DsrEFH-like"/>
    <property type="match status" value="1"/>
</dbReference>
<comment type="function">
    <text evidence="1">Could be part of a sulfur-relay system.</text>
</comment>
<comment type="subcellular location">
    <subcellularLocation>
        <location evidence="1">Cytoplasm</location>
    </subcellularLocation>
</comment>
<comment type="similarity">
    <text evidence="2">Belongs to the DsrE/TusD family.</text>
</comment>
<evidence type="ECO:0000250" key="1"/>
<evidence type="ECO:0000305" key="2"/>
<protein>
    <recommendedName>
        <fullName>Sulfurtransferase TusD homolog</fullName>
        <ecNumber>2.8.1.-</ecNumber>
    </recommendedName>
</protein>
<sequence length="131" mass="14250">MKPLTYTLVVNGPQYGTQSARNAYLFAKALIEKGHILKSVFFYQDGVLNGSSTHVPANDEFNLLQGWQSLAQSHQVQLETCVAAALRRGVVSEQEASQHGLASHNLAAHFTQAGLGSLAQALLEQDRVVQF</sequence>